<keyword id="KW-0687">Ribonucleoprotein</keyword>
<keyword id="KW-0689">Ribosomal protein</keyword>
<keyword id="KW-0694">RNA-binding</keyword>
<keyword id="KW-0699">rRNA-binding</keyword>
<protein>
    <recommendedName>
        <fullName evidence="1">Large ribosomal subunit protein uL4</fullName>
    </recommendedName>
    <alternativeName>
        <fullName evidence="3">50S ribosomal protein L4</fullName>
    </alternativeName>
</protein>
<proteinExistence type="inferred from homology"/>
<sequence length="209" mass="23691">MERKVFSKDGKEIRTINLDDRVFNIEISHGSIYNAIKNELSNLRVGTSSTKTRSEVRGSSKKPWKQKGTGRARVGTRRNPVWIGGGIALGPKPRDYSYRLPKKVKRLAFKSVLSLRASDENNFKVIENFNIESGKTKDLALIIKNFASFNGKVVILLGNDDQMIKRAGKNIRDLKILSFDKLRVVDLFYAKNLIALESAVNKLNEFYVK</sequence>
<name>RL4_BORAP</name>
<feature type="chain" id="PRO_1000052359" description="Large ribosomal subunit protein uL4">
    <location>
        <begin position="1"/>
        <end position="209"/>
    </location>
</feature>
<feature type="region of interest" description="Disordered" evidence="2">
    <location>
        <begin position="46"/>
        <end position="71"/>
    </location>
</feature>
<feature type="compositionally biased region" description="Basic residues" evidence="2">
    <location>
        <begin position="59"/>
        <end position="71"/>
    </location>
</feature>
<accession>Q0SN28</accession>
<accession>G0ISC3</accession>
<evidence type="ECO:0000255" key="1">
    <source>
        <dbReference type="HAMAP-Rule" id="MF_01328"/>
    </source>
</evidence>
<evidence type="ECO:0000256" key="2">
    <source>
        <dbReference type="SAM" id="MobiDB-lite"/>
    </source>
</evidence>
<evidence type="ECO:0000305" key="3"/>
<organism>
    <name type="scientific">Borreliella afzelii (strain PKo)</name>
    <name type="common">Borrelia afzelii</name>
    <dbReference type="NCBI Taxonomy" id="390236"/>
    <lineage>
        <taxon>Bacteria</taxon>
        <taxon>Pseudomonadati</taxon>
        <taxon>Spirochaetota</taxon>
        <taxon>Spirochaetia</taxon>
        <taxon>Spirochaetales</taxon>
        <taxon>Borreliaceae</taxon>
        <taxon>Borreliella</taxon>
    </lineage>
</organism>
<comment type="function">
    <text evidence="1">One of the primary rRNA binding proteins, this protein initially binds near the 5'-end of the 23S rRNA. It is important during the early stages of 50S assembly. It makes multiple contacts with different domains of the 23S rRNA in the assembled 50S subunit and ribosome.</text>
</comment>
<comment type="function">
    <text evidence="1">Forms part of the polypeptide exit tunnel.</text>
</comment>
<comment type="subunit">
    <text evidence="1">Part of the 50S ribosomal subunit.</text>
</comment>
<comment type="similarity">
    <text evidence="1">Belongs to the universal ribosomal protein uL4 family.</text>
</comment>
<reference key="1">
    <citation type="journal article" date="2006" name="BMC Genomics">
        <title>Comparative genome analysis: selection pressure on the Borrelia vls cassettes is essential for infectivity.</title>
        <authorList>
            <person name="Gloeckner G."/>
            <person name="Schulte-Spechtel U."/>
            <person name="Schilhabel M."/>
            <person name="Felder M."/>
            <person name="Suehnel J."/>
            <person name="Wilske B."/>
            <person name="Platzer M."/>
        </authorList>
    </citation>
    <scope>NUCLEOTIDE SEQUENCE [LARGE SCALE GENOMIC DNA]</scope>
    <source>
        <strain>PKo</strain>
    </source>
</reference>
<reference key="2">
    <citation type="journal article" date="2011" name="J. Bacteriol.">
        <title>Whole-genome sequences of two Borrelia afzelii and two Borrelia garinii Lyme disease agent isolates.</title>
        <authorList>
            <person name="Casjens S.R."/>
            <person name="Mongodin E.F."/>
            <person name="Qiu W.G."/>
            <person name="Dunn J.J."/>
            <person name="Luft B.J."/>
            <person name="Fraser-Liggett C.M."/>
            <person name="Schutzer S.E."/>
        </authorList>
    </citation>
    <scope>NUCLEOTIDE SEQUENCE [LARGE SCALE GENOMIC DNA]</scope>
    <source>
        <strain>PKo</strain>
    </source>
</reference>
<dbReference type="EMBL" id="CP000395">
    <property type="protein sequence ID" value="ABH01750.1"/>
    <property type="molecule type" value="Genomic_DNA"/>
</dbReference>
<dbReference type="EMBL" id="CP002933">
    <property type="protein sequence ID" value="AEL69704.1"/>
    <property type="molecule type" value="Genomic_DNA"/>
</dbReference>
<dbReference type="RefSeq" id="WP_011601051.1">
    <property type="nucleotide sequence ID" value="NC_008277.1"/>
</dbReference>
<dbReference type="SMR" id="Q0SN28"/>
<dbReference type="STRING" id="29518.BLA32_01865"/>
<dbReference type="KEGG" id="baf:BAPKO_0507"/>
<dbReference type="KEGG" id="bafz:BafPKo_0496"/>
<dbReference type="PATRIC" id="fig|390236.22.peg.476"/>
<dbReference type="eggNOG" id="COG0088">
    <property type="taxonomic scope" value="Bacteria"/>
</dbReference>
<dbReference type="HOGENOM" id="CLU_041575_5_2_12"/>
<dbReference type="OrthoDB" id="9803201at2"/>
<dbReference type="Proteomes" id="UP000005216">
    <property type="component" value="Chromosome"/>
</dbReference>
<dbReference type="GO" id="GO:1990904">
    <property type="term" value="C:ribonucleoprotein complex"/>
    <property type="evidence" value="ECO:0007669"/>
    <property type="project" value="UniProtKB-KW"/>
</dbReference>
<dbReference type="GO" id="GO:0005840">
    <property type="term" value="C:ribosome"/>
    <property type="evidence" value="ECO:0007669"/>
    <property type="project" value="UniProtKB-KW"/>
</dbReference>
<dbReference type="GO" id="GO:0019843">
    <property type="term" value="F:rRNA binding"/>
    <property type="evidence" value="ECO:0007669"/>
    <property type="project" value="UniProtKB-UniRule"/>
</dbReference>
<dbReference type="GO" id="GO:0003735">
    <property type="term" value="F:structural constituent of ribosome"/>
    <property type="evidence" value="ECO:0007669"/>
    <property type="project" value="InterPro"/>
</dbReference>
<dbReference type="GO" id="GO:0006412">
    <property type="term" value="P:translation"/>
    <property type="evidence" value="ECO:0007669"/>
    <property type="project" value="UniProtKB-UniRule"/>
</dbReference>
<dbReference type="Gene3D" id="3.40.1370.10">
    <property type="match status" value="1"/>
</dbReference>
<dbReference type="HAMAP" id="MF_01328_B">
    <property type="entry name" value="Ribosomal_uL4_B"/>
    <property type="match status" value="1"/>
</dbReference>
<dbReference type="InterPro" id="IPR002136">
    <property type="entry name" value="Ribosomal_uL4"/>
</dbReference>
<dbReference type="InterPro" id="IPR013005">
    <property type="entry name" value="Ribosomal_uL4-like"/>
</dbReference>
<dbReference type="InterPro" id="IPR023574">
    <property type="entry name" value="Ribosomal_uL4_dom_sf"/>
</dbReference>
<dbReference type="NCBIfam" id="TIGR03953">
    <property type="entry name" value="rplD_bact"/>
    <property type="match status" value="1"/>
</dbReference>
<dbReference type="PANTHER" id="PTHR10746">
    <property type="entry name" value="50S RIBOSOMAL PROTEIN L4"/>
    <property type="match status" value="1"/>
</dbReference>
<dbReference type="PANTHER" id="PTHR10746:SF6">
    <property type="entry name" value="LARGE RIBOSOMAL SUBUNIT PROTEIN UL4M"/>
    <property type="match status" value="1"/>
</dbReference>
<dbReference type="Pfam" id="PF00573">
    <property type="entry name" value="Ribosomal_L4"/>
    <property type="match status" value="1"/>
</dbReference>
<dbReference type="SUPFAM" id="SSF52166">
    <property type="entry name" value="Ribosomal protein L4"/>
    <property type="match status" value="1"/>
</dbReference>
<gene>
    <name evidence="1" type="primary">rplD</name>
    <name type="ordered locus">BAPKO_0507</name>
    <name type="ordered locus">BafPKo_0496</name>
</gene>